<proteinExistence type="inferred from homology"/>
<reference key="1">
    <citation type="journal article" date="2016" name="Stand. Genomic Sci.">
        <title>Complete genome sequence of the Antarctic Halorubrum lacusprofundi type strain ACAM 34.</title>
        <authorList>
            <person name="Anderson I.J."/>
            <person name="DasSarma P."/>
            <person name="Lucas S."/>
            <person name="Copeland A."/>
            <person name="Lapidus A."/>
            <person name="Del Rio T.G."/>
            <person name="Tice H."/>
            <person name="Dalin E."/>
            <person name="Bruce D.C."/>
            <person name="Goodwin L."/>
            <person name="Pitluck S."/>
            <person name="Sims D."/>
            <person name="Brettin T.S."/>
            <person name="Detter J.C."/>
            <person name="Han C.S."/>
            <person name="Larimer F."/>
            <person name="Hauser L."/>
            <person name="Land M."/>
            <person name="Ivanova N."/>
            <person name="Richardson P."/>
            <person name="Cavicchioli R."/>
            <person name="DasSarma S."/>
            <person name="Woese C.R."/>
            <person name="Kyrpides N.C."/>
        </authorList>
    </citation>
    <scope>NUCLEOTIDE SEQUENCE [LARGE SCALE GENOMIC DNA]</scope>
    <source>
        <strain>ATCC 49239 / DSM 5036 / JCM 8891 / ACAM 34</strain>
    </source>
</reference>
<name>Y1347_HALLT</name>
<dbReference type="EMBL" id="CP001365">
    <property type="protein sequence ID" value="ACM56939.1"/>
    <property type="molecule type" value="Genomic_DNA"/>
</dbReference>
<dbReference type="RefSeq" id="WP_015910081.1">
    <property type="nucleotide sequence ID" value="NC_012029.1"/>
</dbReference>
<dbReference type="SMR" id="B9LNK1"/>
<dbReference type="GeneID" id="7399442"/>
<dbReference type="KEGG" id="hla:Hlac_1347"/>
<dbReference type="eggNOG" id="arCOG00497">
    <property type="taxonomic scope" value="Archaea"/>
</dbReference>
<dbReference type="HOGENOM" id="CLU_070010_4_0_2"/>
<dbReference type="Proteomes" id="UP000000740">
    <property type="component" value="Chromosome 1"/>
</dbReference>
<dbReference type="GO" id="GO:0016787">
    <property type="term" value="F:hydrolase activity"/>
    <property type="evidence" value="ECO:0007669"/>
    <property type="project" value="UniProtKB-UniRule"/>
</dbReference>
<dbReference type="Gene3D" id="3.60.15.10">
    <property type="entry name" value="Ribonuclease Z/Hydroxyacylglutathione hydrolase-like"/>
    <property type="match status" value="1"/>
</dbReference>
<dbReference type="HAMAP" id="MF_00457">
    <property type="entry name" value="UPF0173"/>
    <property type="match status" value="1"/>
</dbReference>
<dbReference type="InterPro" id="IPR001279">
    <property type="entry name" value="Metallo-B-lactamas"/>
</dbReference>
<dbReference type="InterPro" id="IPR036866">
    <property type="entry name" value="RibonucZ/Hydroxyglut_hydro"/>
</dbReference>
<dbReference type="InterPro" id="IPR022877">
    <property type="entry name" value="UPF0173"/>
</dbReference>
<dbReference type="InterPro" id="IPR050114">
    <property type="entry name" value="UPF0173_UPF0282_UlaG_hydrolase"/>
</dbReference>
<dbReference type="NCBIfam" id="NF001911">
    <property type="entry name" value="PRK00685.1"/>
    <property type="match status" value="1"/>
</dbReference>
<dbReference type="PANTHER" id="PTHR43546:SF3">
    <property type="entry name" value="UPF0173 METAL-DEPENDENT HYDROLASE MJ1163"/>
    <property type="match status" value="1"/>
</dbReference>
<dbReference type="PANTHER" id="PTHR43546">
    <property type="entry name" value="UPF0173 METAL-DEPENDENT HYDROLASE MJ1163-RELATED"/>
    <property type="match status" value="1"/>
</dbReference>
<dbReference type="Pfam" id="PF12706">
    <property type="entry name" value="Lactamase_B_2"/>
    <property type="match status" value="1"/>
</dbReference>
<dbReference type="SUPFAM" id="SSF56281">
    <property type="entry name" value="Metallo-hydrolase/oxidoreductase"/>
    <property type="match status" value="1"/>
</dbReference>
<organism>
    <name type="scientific">Halorubrum lacusprofundi (strain ATCC 49239 / DSM 5036 / JCM 8891 / ACAM 34)</name>
    <dbReference type="NCBI Taxonomy" id="416348"/>
    <lineage>
        <taxon>Archaea</taxon>
        <taxon>Methanobacteriati</taxon>
        <taxon>Methanobacteriota</taxon>
        <taxon>Stenosarchaea group</taxon>
        <taxon>Halobacteria</taxon>
        <taxon>Halobacteriales</taxon>
        <taxon>Haloferacaceae</taxon>
        <taxon>Halorubrum</taxon>
    </lineage>
</organism>
<evidence type="ECO:0000255" key="1">
    <source>
        <dbReference type="HAMAP-Rule" id="MF_00457"/>
    </source>
</evidence>
<feature type="chain" id="PRO_1000197820" description="UPF0173 metal-dependent hydrolase Hlac_1347">
    <location>
        <begin position="1"/>
        <end position="248"/>
    </location>
</feature>
<comment type="similarity">
    <text evidence="1">Belongs to the UPF0173 family.</text>
</comment>
<protein>
    <recommendedName>
        <fullName evidence="1">UPF0173 metal-dependent hydrolase Hlac_1347</fullName>
    </recommendedName>
</protein>
<sequence>MELTWHGHSTWHVVVDDTELLIDPYFDNPKTDVDPEELDPDYLLLTHGHSDHIGDVDRYEGATVVATPELTGYIQENFGHENAVGGMGMNIGGTVECGDAWVTMVRADHSNGIDTGYGTSAGMPAGFVIGDKKPTQESDPDCTTFYHAGDTGLMSEMVDVIAPYLEPDAAALPTGDHFTMGPAGAGIAADWVGADVVFPMHYDTFQPIEIDTREFVNEVKAAGAAAEPVVLEGDETYVLENEFGSDGD</sequence>
<keyword id="KW-0378">Hydrolase</keyword>
<keyword id="KW-1185">Reference proteome</keyword>
<accession>B9LNK1</accession>
<gene>
    <name type="ordered locus">Hlac_1347</name>
</gene>